<feature type="chain" id="PRO_0000326708" description="Acylphosphatase">
    <location>
        <begin position="1"/>
        <end position="92"/>
    </location>
</feature>
<feature type="domain" description="Acylphosphatase-like" evidence="1">
    <location>
        <begin position="5"/>
        <end position="92"/>
    </location>
</feature>
<feature type="active site" evidence="1">
    <location>
        <position position="20"/>
    </location>
</feature>
<feature type="active site" evidence="1">
    <location>
        <position position="38"/>
    </location>
</feature>
<feature type="disulfide bond" evidence="1">
    <location>
        <begin position="5"/>
        <end position="49"/>
    </location>
</feature>
<dbReference type="EC" id="3.6.1.7" evidence="1"/>
<dbReference type="EMBL" id="CP000468">
    <property type="protein sequence ID" value="ABJ00377.1"/>
    <property type="status" value="ALT_INIT"/>
    <property type="molecule type" value="Genomic_DNA"/>
</dbReference>
<dbReference type="RefSeq" id="WP_000048217.1">
    <property type="nucleotide sequence ID" value="NZ_CADILS010000016.1"/>
</dbReference>
<dbReference type="SMR" id="A1A9N7"/>
<dbReference type="KEGG" id="ecv:APECO1_73"/>
<dbReference type="HOGENOM" id="CLU_1624530_0_0_6"/>
<dbReference type="Proteomes" id="UP000008216">
    <property type="component" value="Chromosome"/>
</dbReference>
<dbReference type="GO" id="GO:0003998">
    <property type="term" value="F:acylphosphatase activity"/>
    <property type="evidence" value="ECO:0007669"/>
    <property type="project" value="UniProtKB-UniRule"/>
</dbReference>
<dbReference type="FunFam" id="3.30.70.100:FF:000012">
    <property type="entry name" value="Acylphosphatase"/>
    <property type="match status" value="1"/>
</dbReference>
<dbReference type="Gene3D" id="3.30.70.100">
    <property type="match status" value="1"/>
</dbReference>
<dbReference type="HAMAP" id="MF_01450">
    <property type="entry name" value="Acylphosphatase_entero"/>
    <property type="match status" value="1"/>
</dbReference>
<dbReference type="InterPro" id="IPR020456">
    <property type="entry name" value="Acylphosphatase"/>
</dbReference>
<dbReference type="InterPro" id="IPR001792">
    <property type="entry name" value="Acylphosphatase-like_dom"/>
</dbReference>
<dbReference type="InterPro" id="IPR036046">
    <property type="entry name" value="Acylphosphatase-like_dom_sf"/>
</dbReference>
<dbReference type="InterPro" id="IPR028627">
    <property type="entry name" value="Acylphosphatase_bac"/>
</dbReference>
<dbReference type="InterPro" id="IPR017968">
    <property type="entry name" value="Acylphosphatase_CS"/>
</dbReference>
<dbReference type="NCBIfam" id="NF011000">
    <property type="entry name" value="PRK14426.1"/>
    <property type="match status" value="1"/>
</dbReference>
<dbReference type="PANTHER" id="PTHR47268">
    <property type="entry name" value="ACYLPHOSPHATASE"/>
    <property type="match status" value="1"/>
</dbReference>
<dbReference type="PANTHER" id="PTHR47268:SF4">
    <property type="entry name" value="ACYLPHOSPHATASE"/>
    <property type="match status" value="1"/>
</dbReference>
<dbReference type="Pfam" id="PF00708">
    <property type="entry name" value="Acylphosphatase"/>
    <property type="match status" value="1"/>
</dbReference>
<dbReference type="PRINTS" id="PR00112">
    <property type="entry name" value="ACYLPHPHTASE"/>
</dbReference>
<dbReference type="SUPFAM" id="SSF54975">
    <property type="entry name" value="Acylphosphatase/BLUF domain-like"/>
    <property type="match status" value="1"/>
</dbReference>
<dbReference type="PROSITE" id="PS00150">
    <property type="entry name" value="ACYLPHOSPHATASE_1"/>
    <property type="match status" value="1"/>
</dbReference>
<dbReference type="PROSITE" id="PS00151">
    <property type="entry name" value="ACYLPHOSPHATASE_2"/>
    <property type="match status" value="1"/>
</dbReference>
<dbReference type="PROSITE" id="PS51160">
    <property type="entry name" value="ACYLPHOSPHATASE_3"/>
    <property type="match status" value="1"/>
</dbReference>
<organism>
    <name type="scientific">Escherichia coli O1:K1 / APEC</name>
    <dbReference type="NCBI Taxonomy" id="405955"/>
    <lineage>
        <taxon>Bacteria</taxon>
        <taxon>Pseudomonadati</taxon>
        <taxon>Pseudomonadota</taxon>
        <taxon>Gammaproteobacteria</taxon>
        <taxon>Enterobacterales</taxon>
        <taxon>Enterobacteriaceae</taxon>
        <taxon>Escherichia</taxon>
    </lineage>
</organism>
<comment type="catalytic activity">
    <reaction evidence="1">
        <text>an acyl phosphate + H2O = a carboxylate + phosphate + H(+)</text>
        <dbReference type="Rhea" id="RHEA:14965"/>
        <dbReference type="ChEBI" id="CHEBI:15377"/>
        <dbReference type="ChEBI" id="CHEBI:15378"/>
        <dbReference type="ChEBI" id="CHEBI:29067"/>
        <dbReference type="ChEBI" id="CHEBI:43474"/>
        <dbReference type="ChEBI" id="CHEBI:59918"/>
        <dbReference type="EC" id="3.6.1.7"/>
    </reaction>
</comment>
<comment type="similarity">
    <text evidence="1">Belongs to the acylphosphatase family.</text>
</comment>
<comment type="sequence caution" evidence="2">
    <conflict type="erroneous initiation">
        <sequence resource="EMBL-CDS" id="ABJ00377"/>
    </conflict>
</comment>
<sequence length="92" mass="10254">MSKVCIIAWIYGRVQGVGFRYTTQYEAKKLGLTGYAKNLDDGSVEVVACGDEGQVEKLIQWLKSGGPRSARVERVLSEPHHPSGELTDFRIR</sequence>
<evidence type="ECO:0000255" key="1">
    <source>
        <dbReference type="HAMAP-Rule" id="MF_01450"/>
    </source>
</evidence>
<evidence type="ECO:0000305" key="2"/>
<reference key="1">
    <citation type="journal article" date="2007" name="J. Bacteriol.">
        <title>The genome sequence of avian pathogenic Escherichia coli strain O1:K1:H7 shares strong similarities with human extraintestinal pathogenic E. coli genomes.</title>
        <authorList>
            <person name="Johnson T.J."/>
            <person name="Kariyawasam S."/>
            <person name="Wannemuehler Y."/>
            <person name="Mangiamele P."/>
            <person name="Johnson S.J."/>
            <person name="Doetkott C."/>
            <person name="Skyberg J.A."/>
            <person name="Lynne A.M."/>
            <person name="Johnson J.R."/>
            <person name="Nolan L.K."/>
        </authorList>
    </citation>
    <scope>NUCLEOTIDE SEQUENCE [LARGE SCALE GENOMIC DNA]</scope>
</reference>
<name>ACYP_ECOK1</name>
<protein>
    <recommendedName>
        <fullName evidence="1">Acylphosphatase</fullName>
        <ecNumber evidence="1">3.6.1.7</ecNumber>
    </recommendedName>
    <alternativeName>
        <fullName evidence="1">Acylphosphate phosphohydrolase</fullName>
    </alternativeName>
</protein>
<accession>A1A9N7</accession>
<keyword id="KW-1015">Disulfide bond</keyword>
<keyword id="KW-0378">Hydrolase</keyword>
<keyword id="KW-1185">Reference proteome</keyword>
<proteinExistence type="inferred from homology"/>
<gene>
    <name evidence="1" type="primary">yccX</name>
    <name type="ordered locus">Ecok1_08830</name>
    <name type="ORF">APECO1_73</name>
</gene>